<reference key="1">
    <citation type="journal article" date="2000" name="Nature">
        <title>Complete DNA sequence of a serogroup A strain of Neisseria meningitidis Z2491.</title>
        <authorList>
            <person name="Parkhill J."/>
            <person name="Achtman M."/>
            <person name="James K.D."/>
            <person name="Bentley S.D."/>
            <person name="Churcher C.M."/>
            <person name="Klee S.R."/>
            <person name="Morelli G."/>
            <person name="Basham D."/>
            <person name="Brown D."/>
            <person name="Chillingworth T."/>
            <person name="Davies R.M."/>
            <person name="Davis P."/>
            <person name="Devlin K."/>
            <person name="Feltwell T."/>
            <person name="Hamlin N."/>
            <person name="Holroyd S."/>
            <person name="Jagels K."/>
            <person name="Leather S."/>
            <person name="Moule S."/>
            <person name="Mungall K.L."/>
            <person name="Quail M.A."/>
            <person name="Rajandream M.A."/>
            <person name="Rutherford K.M."/>
            <person name="Simmonds M."/>
            <person name="Skelton J."/>
            <person name="Whitehead S."/>
            <person name="Spratt B.G."/>
            <person name="Barrell B.G."/>
        </authorList>
    </citation>
    <scope>NUCLEOTIDE SEQUENCE [LARGE SCALE GENOMIC DNA]</scope>
    <source>
        <strain>DSM 15465 / Z2491</strain>
    </source>
</reference>
<keyword id="KW-0687">Ribonucleoprotein</keyword>
<keyword id="KW-0689">Ribosomal protein</keyword>
<sequence length="70" mass="8355">MPAIRVKENEPFEVAMRRFKRAVEKTGLLTELRAREAYEKPTTERKRKKAAAVKRLQKRLRSQQLPPKMY</sequence>
<protein>
    <recommendedName>
        <fullName evidence="1">Small ribosomal subunit protein bS21</fullName>
    </recommendedName>
    <alternativeName>
        <fullName>30S ribosomal protein S21</fullName>
    </alternativeName>
</protein>
<name>RS21_NEIMA</name>
<dbReference type="EMBL" id="AL157959">
    <property type="protein sequence ID" value="CAM07780.1"/>
    <property type="molecule type" value="Genomic_DNA"/>
</dbReference>
<dbReference type="RefSeq" id="WP_002214819.1">
    <property type="nucleotide sequence ID" value="NC_003116.1"/>
</dbReference>
<dbReference type="SMR" id="P66518"/>
<dbReference type="EnsemblBacteria" id="CAM07780">
    <property type="protein sequence ID" value="CAM07780"/>
    <property type="gene ID" value="NMA0502"/>
</dbReference>
<dbReference type="GeneID" id="93386856"/>
<dbReference type="KEGG" id="nma:NMA0502"/>
<dbReference type="HOGENOM" id="CLU_159258_1_1_4"/>
<dbReference type="Proteomes" id="UP000000626">
    <property type="component" value="Chromosome"/>
</dbReference>
<dbReference type="GO" id="GO:1990904">
    <property type="term" value="C:ribonucleoprotein complex"/>
    <property type="evidence" value="ECO:0007669"/>
    <property type="project" value="UniProtKB-KW"/>
</dbReference>
<dbReference type="GO" id="GO:0005840">
    <property type="term" value="C:ribosome"/>
    <property type="evidence" value="ECO:0007669"/>
    <property type="project" value="UniProtKB-KW"/>
</dbReference>
<dbReference type="GO" id="GO:0003735">
    <property type="term" value="F:structural constituent of ribosome"/>
    <property type="evidence" value="ECO:0007669"/>
    <property type="project" value="InterPro"/>
</dbReference>
<dbReference type="GO" id="GO:0006412">
    <property type="term" value="P:translation"/>
    <property type="evidence" value="ECO:0007669"/>
    <property type="project" value="UniProtKB-UniRule"/>
</dbReference>
<dbReference type="Gene3D" id="1.20.5.1150">
    <property type="entry name" value="Ribosomal protein S8"/>
    <property type="match status" value="1"/>
</dbReference>
<dbReference type="HAMAP" id="MF_00358">
    <property type="entry name" value="Ribosomal_bS21"/>
    <property type="match status" value="1"/>
</dbReference>
<dbReference type="InterPro" id="IPR001911">
    <property type="entry name" value="Ribosomal_bS21"/>
</dbReference>
<dbReference type="InterPro" id="IPR038380">
    <property type="entry name" value="Ribosomal_bS21_sf"/>
</dbReference>
<dbReference type="NCBIfam" id="TIGR00030">
    <property type="entry name" value="S21p"/>
    <property type="match status" value="1"/>
</dbReference>
<dbReference type="PANTHER" id="PTHR21109">
    <property type="entry name" value="MITOCHONDRIAL 28S RIBOSOMAL PROTEIN S21"/>
    <property type="match status" value="1"/>
</dbReference>
<dbReference type="PANTHER" id="PTHR21109:SF22">
    <property type="entry name" value="SMALL RIBOSOMAL SUBUNIT PROTEIN BS21"/>
    <property type="match status" value="1"/>
</dbReference>
<dbReference type="Pfam" id="PF01165">
    <property type="entry name" value="Ribosomal_S21"/>
    <property type="match status" value="1"/>
</dbReference>
<dbReference type="PRINTS" id="PR00976">
    <property type="entry name" value="RIBOSOMALS21"/>
</dbReference>
<feature type="chain" id="PRO_0000178355" description="Small ribosomal subunit protein bS21">
    <location>
        <begin position="1"/>
        <end position="70"/>
    </location>
</feature>
<accession>P66518</accession>
<accession>A1IPV9</accession>
<accession>Q9JRG3</accession>
<organism>
    <name type="scientific">Neisseria meningitidis serogroup A / serotype 4A (strain DSM 15465 / Z2491)</name>
    <dbReference type="NCBI Taxonomy" id="122587"/>
    <lineage>
        <taxon>Bacteria</taxon>
        <taxon>Pseudomonadati</taxon>
        <taxon>Pseudomonadota</taxon>
        <taxon>Betaproteobacteria</taxon>
        <taxon>Neisseriales</taxon>
        <taxon>Neisseriaceae</taxon>
        <taxon>Neisseria</taxon>
    </lineage>
</organism>
<evidence type="ECO:0000305" key="1"/>
<comment type="similarity">
    <text evidence="1">Belongs to the bacterial ribosomal protein bS21 family.</text>
</comment>
<gene>
    <name type="primary">rpsU</name>
    <name type="ordered locus">NMA0502</name>
</gene>
<proteinExistence type="inferred from homology"/>